<reference key="1">
    <citation type="journal article" date="2002" name="Genome Res.">
        <title>The genome of Methanosarcina acetivorans reveals extensive metabolic and physiological diversity.</title>
        <authorList>
            <person name="Galagan J.E."/>
            <person name="Nusbaum C."/>
            <person name="Roy A."/>
            <person name="Endrizzi M.G."/>
            <person name="Macdonald P."/>
            <person name="FitzHugh W."/>
            <person name="Calvo S."/>
            <person name="Engels R."/>
            <person name="Smirnov S."/>
            <person name="Atnoor D."/>
            <person name="Brown A."/>
            <person name="Allen N."/>
            <person name="Naylor J."/>
            <person name="Stange-Thomann N."/>
            <person name="DeArellano K."/>
            <person name="Johnson R."/>
            <person name="Linton L."/>
            <person name="McEwan P."/>
            <person name="McKernan K."/>
            <person name="Talamas J."/>
            <person name="Tirrell A."/>
            <person name="Ye W."/>
            <person name="Zimmer A."/>
            <person name="Barber R.D."/>
            <person name="Cann I."/>
            <person name="Graham D.E."/>
            <person name="Grahame D.A."/>
            <person name="Guss A.M."/>
            <person name="Hedderich R."/>
            <person name="Ingram-Smith C."/>
            <person name="Kuettner H.C."/>
            <person name="Krzycki J.A."/>
            <person name="Leigh J.A."/>
            <person name="Li W."/>
            <person name="Liu J."/>
            <person name="Mukhopadhyay B."/>
            <person name="Reeve J.N."/>
            <person name="Smith K."/>
            <person name="Springer T.A."/>
            <person name="Umayam L.A."/>
            <person name="White O."/>
            <person name="White R.H."/>
            <person name="de Macario E.C."/>
            <person name="Ferry J.G."/>
            <person name="Jarrell K.F."/>
            <person name="Jing H."/>
            <person name="Macario A.J.L."/>
            <person name="Paulsen I.T."/>
            <person name="Pritchett M."/>
            <person name="Sowers K.R."/>
            <person name="Swanson R.V."/>
            <person name="Zinder S.H."/>
            <person name="Lander E."/>
            <person name="Metcalf W.W."/>
            <person name="Birren B."/>
        </authorList>
    </citation>
    <scope>NUCLEOTIDE SEQUENCE [LARGE SCALE GENOMIC DNA]</scope>
    <source>
        <strain>ATCC 35395 / DSM 2834 / JCM 12185 / C2A</strain>
    </source>
</reference>
<organism>
    <name type="scientific">Methanosarcina acetivorans (strain ATCC 35395 / DSM 2834 / JCM 12185 / C2A)</name>
    <dbReference type="NCBI Taxonomy" id="188937"/>
    <lineage>
        <taxon>Archaea</taxon>
        <taxon>Methanobacteriati</taxon>
        <taxon>Methanobacteriota</taxon>
        <taxon>Stenosarchaea group</taxon>
        <taxon>Methanomicrobia</taxon>
        <taxon>Methanosarcinales</taxon>
        <taxon>Methanosarcinaceae</taxon>
        <taxon>Methanosarcina</taxon>
    </lineage>
</organism>
<dbReference type="EC" id="2.7.4.22" evidence="1"/>
<dbReference type="EMBL" id="AE010299">
    <property type="protein sequence ID" value="AAM03824.1"/>
    <property type="molecule type" value="Genomic_DNA"/>
</dbReference>
<dbReference type="RefSeq" id="WP_011020429.1">
    <property type="nucleotide sequence ID" value="NC_003552.1"/>
</dbReference>
<dbReference type="SMR" id="Q8TTQ4"/>
<dbReference type="FunCoup" id="Q8TTQ4">
    <property type="interactions" value="156"/>
</dbReference>
<dbReference type="STRING" id="188937.MA_0372"/>
<dbReference type="EnsemblBacteria" id="AAM03824">
    <property type="protein sequence ID" value="AAM03824"/>
    <property type="gene ID" value="MA_0372"/>
</dbReference>
<dbReference type="GeneID" id="1472264"/>
<dbReference type="KEGG" id="mac:MA_0372"/>
<dbReference type="HOGENOM" id="CLU_079546_0_0_2"/>
<dbReference type="InParanoid" id="Q8TTQ4"/>
<dbReference type="OrthoDB" id="372251at2157"/>
<dbReference type="PhylomeDB" id="Q8TTQ4"/>
<dbReference type="UniPathway" id="UPA00159">
    <property type="reaction ID" value="UER00275"/>
</dbReference>
<dbReference type="Proteomes" id="UP000002487">
    <property type="component" value="Chromosome"/>
</dbReference>
<dbReference type="GO" id="GO:0005737">
    <property type="term" value="C:cytoplasm"/>
    <property type="evidence" value="ECO:0007669"/>
    <property type="project" value="UniProtKB-SubCell"/>
</dbReference>
<dbReference type="GO" id="GO:0005524">
    <property type="term" value="F:ATP binding"/>
    <property type="evidence" value="ECO:0007669"/>
    <property type="project" value="UniProtKB-KW"/>
</dbReference>
<dbReference type="GO" id="GO:0033862">
    <property type="term" value="F:UMP kinase activity"/>
    <property type="evidence" value="ECO:0000318"/>
    <property type="project" value="GO_Central"/>
</dbReference>
<dbReference type="GO" id="GO:0044210">
    <property type="term" value="P:'de novo' CTP biosynthetic process"/>
    <property type="evidence" value="ECO:0007669"/>
    <property type="project" value="UniProtKB-UniRule"/>
</dbReference>
<dbReference type="GO" id="GO:0006225">
    <property type="term" value="P:UDP biosynthetic process"/>
    <property type="evidence" value="ECO:0000318"/>
    <property type="project" value="GO_Central"/>
</dbReference>
<dbReference type="CDD" id="cd04253">
    <property type="entry name" value="AAK_UMPK-PyrH-Pf"/>
    <property type="match status" value="1"/>
</dbReference>
<dbReference type="FunFam" id="3.40.1160.10:FF:000030">
    <property type="entry name" value="Uridylate kinase"/>
    <property type="match status" value="1"/>
</dbReference>
<dbReference type="Gene3D" id="3.40.1160.10">
    <property type="entry name" value="Acetylglutamate kinase-like"/>
    <property type="match status" value="1"/>
</dbReference>
<dbReference type="HAMAP" id="MF_01220_A">
    <property type="entry name" value="PyrH_A"/>
    <property type="match status" value="1"/>
</dbReference>
<dbReference type="InterPro" id="IPR036393">
    <property type="entry name" value="AceGlu_kinase-like_sf"/>
</dbReference>
<dbReference type="InterPro" id="IPR001048">
    <property type="entry name" value="Asp/Glu/Uridylate_kinase"/>
</dbReference>
<dbReference type="InterPro" id="IPR011817">
    <property type="entry name" value="Uridylate_kinase"/>
</dbReference>
<dbReference type="InterPro" id="IPR011818">
    <property type="entry name" value="Uridylate_kinase_arch/spir"/>
</dbReference>
<dbReference type="NCBIfam" id="TIGR02076">
    <property type="entry name" value="pyrH_arch"/>
    <property type="match status" value="1"/>
</dbReference>
<dbReference type="PANTHER" id="PTHR42833">
    <property type="entry name" value="URIDYLATE KINASE"/>
    <property type="match status" value="1"/>
</dbReference>
<dbReference type="PANTHER" id="PTHR42833:SF4">
    <property type="entry name" value="URIDYLATE KINASE PUMPKIN, CHLOROPLASTIC"/>
    <property type="match status" value="1"/>
</dbReference>
<dbReference type="Pfam" id="PF00696">
    <property type="entry name" value="AA_kinase"/>
    <property type="match status" value="1"/>
</dbReference>
<dbReference type="PIRSF" id="PIRSF005650">
    <property type="entry name" value="Uridylate_kin"/>
    <property type="match status" value="1"/>
</dbReference>
<dbReference type="SUPFAM" id="SSF53633">
    <property type="entry name" value="Carbamate kinase-like"/>
    <property type="match status" value="1"/>
</dbReference>
<gene>
    <name evidence="1" type="primary">pyrH</name>
    <name type="ordered locus">MA_0372</name>
</gene>
<accession>Q8TTQ4</accession>
<evidence type="ECO:0000255" key="1">
    <source>
        <dbReference type="HAMAP-Rule" id="MF_01220"/>
    </source>
</evidence>
<feature type="chain" id="PRO_0000143916" description="Uridylate kinase">
    <location>
        <begin position="1"/>
        <end position="233"/>
    </location>
</feature>
<feature type="binding site" evidence="1">
    <location>
        <begin position="9"/>
        <end position="10"/>
    </location>
    <ligand>
        <name>ATP</name>
        <dbReference type="ChEBI" id="CHEBI:30616"/>
    </ligand>
</feature>
<feature type="binding site" evidence="1">
    <location>
        <position position="43"/>
    </location>
    <ligand>
        <name>UMP</name>
        <dbReference type="ChEBI" id="CHEBI:57865"/>
    </ligand>
</feature>
<feature type="binding site" evidence="1">
    <location>
        <position position="44"/>
    </location>
    <ligand>
        <name>ATP</name>
        <dbReference type="ChEBI" id="CHEBI:30616"/>
    </ligand>
</feature>
<feature type="binding site" evidence="1">
    <location>
        <position position="48"/>
    </location>
    <ligand>
        <name>ATP</name>
        <dbReference type="ChEBI" id="CHEBI:30616"/>
    </ligand>
</feature>
<feature type="binding site" evidence="1">
    <location>
        <position position="65"/>
    </location>
    <ligand>
        <name>UMP</name>
        <dbReference type="ChEBI" id="CHEBI:57865"/>
    </ligand>
</feature>
<feature type="binding site" evidence="1">
    <location>
        <begin position="113"/>
        <end position="119"/>
    </location>
    <ligand>
        <name>UMP</name>
        <dbReference type="ChEBI" id="CHEBI:57865"/>
    </ligand>
</feature>
<feature type="binding site" evidence="1">
    <location>
        <position position="139"/>
    </location>
    <ligand>
        <name>ATP</name>
        <dbReference type="ChEBI" id="CHEBI:30616"/>
    </ligand>
</feature>
<feature type="binding site" evidence="1">
    <location>
        <position position="145"/>
    </location>
    <ligand>
        <name>ATP</name>
        <dbReference type="ChEBI" id="CHEBI:30616"/>
    </ligand>
</feature>
<feature type="binding site" evidence="1">
    <location>
        <position position="148"/>
    </location>
    <ligand>
        <name>ATP</name>
        <dbReference type="ChEBI" id="CHEBI:30616"/>
    </ligand>
</feature>
<name>PYRH_METAC</name>
<keyword id="KW-0067">ATP-binding</keyword>
<keyword id="KW-0963">Cytoplasm</keyword>
<keyword id="KW-0418">Kinase</keyword>
<keyword id="KW-0547">Nucleotide-binding</keyword>
<keyword id="KW-0665">Pyrimidine biosynthesis</keyword>
<keyword id="KW-1185">Reference proteome</keyword>
<keyword id="KW-0808">Transferase</keyword>
<comment type="function">
    <text evidence="1">Catalyzes the reversible phosphorylation of UMP to UDP.</text>
</comment>
<comment type="catalytic activity">
    <reaction evidence="1">
        <text>UMP + ATP = UDP + ADP</text>
        <dbReference type="Rhea" id="RHEA:24400"/>
        <dbReference type="ChEBI" id="CHEBI:30616"/>
        <dbReference type="ChEBI" id="CHEBI:57865"/>
        <dbReference type="ChEBI" id="CHEBI:58223"/>
        <dbReference type="ChEBI" id="CHEBI:456216"/>
        <dbReference type="EC" id="2.7.4.22"/>
    </reaction>
</comment>
<comment type="activity regulation">
    <text evidence="1">Inhibited by UTP.</text>
</comment>
<comment type="pathway">
    <text evidence="1">Pyrimidine metabolism; CTP biosynthesis via de novo pathway; UDP from UMP (UMPK route): step 1/1.</text>
</comment>
<comment type="subunit">
    <text evidence="1">Homohexamer.</text>
</comment>
<comment type="subcellular location">
    <subcellularLocation>
        <location evidence="1">Cytoplasm</location>
    </subcellularLocation>
</comment>
<comment type="similarity">
    <text evidence="1">Belongs to the UMP kinase family.</text>
</comment>
<sequence length="233" mass="24664">MLIVLSLGGSILAKNLDSDRFLKYANVLRDISKKHTLLVITGGGEAARNYIGAARAMGADEVTCDYIGIDITRLNARLLIAALGPDGYPEIPTNYLEASKAINSGKVVVMGGVTPGQTTDAVAAILAEYLRADLLTIATSIDGVYSSDPNCDPSAVKYDKISPEKLINIVMAIEMKAGSKSPVDPVAAKIIERCKLDALVMDARDPSLLGEILGEEVAKKSPVSCGTWITARK</sequence>
<protein>
    <recommendedName>
        <fullName evidence="1">Uridylate kinase</fullName>
        <shortName evidence="1">UK</shortName>
        <ecNumber evidence="1">2.7.4.22</ecNumber>
    </recommendedName>
    <alternativeName>
        <fullName evidence="1">Uridine monophosphate kinase</fullName>
        <shortName evidence="1">UMP kinase</shortName>
        <shortName evidence="1">UMPK</shortName>
    </alternativeName>
</protein>
<proteinExistence type="inferred from homology"/>